<protein>
    <recommendedName>
        <fullName evidence="1">sn-glycerol-3-phosphate import ATP-binding protein UgpC</fullName>
        <ecNumber evidence="1">7.6.2.10</ecNumber>
    </recommendedName>
</protein>
<sequence length="370" mass="39828">MATLRLDGIRKRYPNGMTALHSIDLSVADGELIVVVGPSGCGKSTLLRILAGLEPITAGELAINGRRVNELEPAARDIAMVFQNYALYPHMSVAGNMAYALKNRGTPKDEIRRRVANTAALLGLDDLLERRPRQLSGGQRQRVAMGRAIIREPQVFLFDEPLSNLDAKLRVQMRLEIRRLQKRLGITSVYVTHDQVEAMTLADRLVVMNGGHVEQCGTPMALYARPATRFVASFLGSPAMNFLPVTAHAGGVVLPNGAQVALPAILPEGDAATLGIRPEHLVEATASGEAAATLDVTVEMLEPLGADTLAYTRLPGVETWLVVRLDGAHAAREGQRLSLALPVAHCHVFDARGARVPMTGREDAEALAAQ</sequence>
<organism>
    <name type="scientific">Chromohalobacter salexigens (strain ATCC BAA-138 / DSM 3043 / CIP 106854 / NCIMB 13768 / 1H11)</name>
    <dbReference type="NCBI Taxonomy" id="290398"/>
    <lineage>
        <taxon>Bacteria</taxon>
        <taxon>Pseudomonadati</taxon>
        <taxon>Pseudomonadota</taxon>
        <taxon>Gammaproteobacteria</taxon>
        <taxon>Oceanospirillales</taxon>
        <taxon>Halomonadaceae</taxon>
        <taxon>Chromohalobacter</taxon>
    </lineage>
</organism>
<name>UGPC_CHRSD</name>
<gene>
    <name evidence="1" type="primary">ugpC</name>
    <name type="ordered locus">Csal_2735</name>
</gene>
<reference key="1">
    <citation type="journal article" date="2011" name="Stand. Genomic Sci.">
        <title>Complete genome sequence of the halophilic and highly halotolerant Chromohalobacter salexigens type strain (1H11(T)).</title>
        <authorList>
            <person name="Copeland A."/>
            <person name="O'Connor K."/>
            <person name="Lucas S."/>
            <person name="Lapidus A."/>
            <person name="Berry K.W."/>
            <person name="Detter J.C."/>
            <person name="Del Rio T.G."/>
            <person name="Hammon N."/>
            <person name="Dalin E."/>
            <person name="Tice H."/>
            <person name="Pitluck S."/>
            <person name="Bruce D."/>
            <person name="Goodwin L."/>
            <person name="Han C."/>
            <person name="Tapia R."/>
            <person name="Saunders E."/>
            <person name="Schmutz J."/>
            <person name="Brettin T."/>
            <person name="Larimer F."/>
            <person name="Land M."/>
            <person name="Hauser L."/>
            <person name="Vargas C."/>
            <person name="Nieto J.J."/>
            <person name="Kyrpides N.C."/>
            <person name="Ivanova N."/>
            <person name="Goker M."/>
            <person name="Klenk H.P."/>
            <person name="Csonka L.N."/>
            <person name="Woyke T."/>
        </authorList>
    </citation>
    <scope>NUCLEOTIDE SEQUENCE [LARGE SCALE GENOMIC DNA]</scope>
    <source>
        <strain>ATCC BAA-138 / DSM 3043 / CIP 106854 / NCIMB 13768 / 1H11</strain>
    </source>
</reference>
<dbReference type="EC" id="7.6.2.10" evidence="1"/>
<dbReference type="EMBL" id="CP000285">
    <property type="protein sequence ID" value="ABE60082.1"/>
    <property type="molecule type" value="Genomic_DNA"/>
</dbReference>
<dbReference type="RefSeq" id="WP_011508028.1">
    <property type="nucleotide sequence ID" value="NC_007963.1"/>
</dbReference>
<dbReference type="SMR" id="Q1QTX6"/>
<dbReference type="STRING" id="290398.Csal_2735"/>
<dbReference type="GeneID" id="95335433"/>
<dbReference type="KEGG" id="csa:Csal_2735"/>
<dbReference type="eggNOG" id="COG3842">
    <property type="taxonomic scope" value="Bacteria"/>
</dbReference>
<dbReference type="HOGENOM" id="CLU_000604_1_1_6"/>
<dbReference type="OrthoDB" id="9802264at2"/>
<dbReference type="Proteomes" id="UP000000239">
    <property type="component" value="Chromosome"/>
</dbReference>
<dbReference type="GO" id="GO:0055052">
    <property type="term" value="C:ATP-binding cassette (ABC) transporter complex, substrate-binding subunit-containing"/>
    <property type="evidence" value="ECO:0007669"/>
    <property type="project" value="TreeGrafter"/>
</dbReference>
<dbReference type="GO" id="GO:0015430">
    <property type="term" value="F:ABC-type glycerol-3-phosphate transporter activity"/>
    <property type="evidence" value="ECO:0007669"/>
    <property type="project" value="UniProtKB-EC"/>
</dbReference>
<dbReference type="GO" id="GO:0005524">
    <property type="term" value="F:ATP binding"/>
    <property type="evidence" value="ECO:0007669"/>
    <property type="project" value="UniProtKB-KW"/>
</dbReference>
<dbReference type="GO" id="GO:0016887">
    <property type="term" value="F:ATP hydrolysis activity"/>
    <property type="evidence" value="ECO:0007669"/>
    <property type="project" value="InterPro"/>
</dbReference>
<dbReference type="GO" id="GO:0008643">
    <property type="term" value="P:carbohydrate transport"/>
    <property type="evidence" value="ECO:0007669"/>
    <property type="project" value="InterPro"/>
</dbReference>
<dbReference type="GO" id="GO:0001407">
    <property type="term" value="P:glycerophosphodiester transmembrane transport"/>
    <property type="evidence" value="ECO:0007669"/>
    <property type="project" value="TreeGrafter"/>
</dbReference>
<dbReference type="CDD" id="cd03301">
    <property type="entry name" value="ABC_MalK_N"/>
    <property type="match status" value="1"/>
</dbReference>
<dbReference type="FunFam" id="3.40.50.300:FF:000042">
    <property type="entry name" value="Maltose/maltodextrin ABC transporter, ATP-binding protein"/>
    <property type="match status" value="1"/>
</dbReference>
<dbReference type="Gene3D" id="2.40.50.100">
    <property type="match status" value="1"/>
</dbReference>
<dbReference type="Gene3D" id="2.40.50.140">
    <property type="entry name" value="Nucleic acid-binding proteins"/>
    <property type="match status" value="1"/>
</dbReference>
<dbReference type="Gene3D" id="3.40.50.300">
    <property type="entry name" value="P-loop containing nucleotide triphosphate hydrolases"/>
    <property type="match status" value="1"/>
</dbReference>
<dbReference type="InterPro" id="IPR003593">
    <property type="entry name" value="AAA+_ATPase"/>
</dbReference>
<dbReference type="InterPro" id="IPR003439">
    <property type="entry name" value="ABC_transporter-like_ATP-bd"/>
</dbReference>
<dbReference type="InterPro" id="IPR017871">
    <property type="entry name" value="ABC_transporter-like_CS"/>
</dbReference>
<dbReference type="InterPro" id="IPR015855">
    <property type="entry name" value="ABC_transpr_MalK-like"/>
</dbReference>
<dbReference type="InterPro" id="IPR047641">
    <property type="entry name" value="ABC_transpr_MalK/UgpC-like"/>
</dbReference>
<dbReference type="InterPro" id="IPR008995">
    <property type="entry name" value="Mo/tungstate-bd_C_term_dom"/>
</dbReference>
<dbReference type="InterPro" id="IPR012340">
    <property type="entry name" value="NA-bd_OB-fold"/>
</dbReference>
<dbReference type="InterPro" id="IPR040582">
    <property type="entry name" value="OB_MalK-like"/>
</dbReference>
<dbReference type="InterPro" id="IPR027417">
    <property type="entry name" value="P-loop_NTPase"/>
</dbReference>
<dbReference type="NCBIfam" id="NF008653">
    <property type="entry name" value="PRK11650.1"/>
    <property type="match status" value="1"/>
</dbReference>
<dbReference type="PANTHER" id="PTHR43875">
    <property type="entry name" value="MALTODEXTRIN IMPORT ATP-BINDING PROTEIN MSMX"/>
    <property type="match status" value="1"/>
</dbReference>
<dbReference type="PANTHER" id="PTHR43875:SF12">
    <property type="entry name" value="SN-GLYCEROL-3-PHOSPHATE IMPORT ATP-BINDING PROTEIN UGPC"/>
    <property type="match status" value="1"/>
</dbReference>
<dbReference type="Pfam" id="PF00005">
    <property type="entry name" value="ABC_tran"/>
    <property type="match status" value="1"/>
</dbReference>
<dbReference type="Pfam" id="PF17912">
    <property type="entry name" value="OB_MalK"/>
    <property type="match status" value="1"/>
</dbReference>
<dbReference type="SMART" id="SM00382">
    <property type="entry name" value="AAA"/>
    <property type="match status" value="1"/>
</dbReference>
<dbReference type="SUPFAM" id="SSF50331">
    <property type="entry name" value="MOP-like"/>
    <property type="match status" value="1"/>
</dbReference>
<dbReference type="SUPFAM" id="SSF52540">
    <property type="entry name" value="P-loop containing nucleoside triphosphate hydrolases"/>
    <property type="match status" value="1"/>
</dbReference>
<dbReference type="PROSITE" id="PS00211">
    <property type="entry name" value="ABC_TRANSPORTER_1"/>
    <property type="match status" value="1"/>
</dbReference>
<dbReference type="PROSITE" id="PS50893">
    <property type="entry name" value="ABC_TRANSPORTER_2"/>
    <property type="match status" value="1"/>
</dbReference>
<dbReference type="PROSITE" id="PS51315">
    <property type="entry name" value="UGPC"/>
    <property type="match status" value="1"/>
</dbReference>
<proteinExistence type="inferred from homology"/>
<evidence type="ECO:0000255" key="1">
    <source>
        <dbReference type="HAMAP-Rule" id="MF_01727"/>
    </source>
</evidence>
<feature type="chain" id="PRO_0000289748" description="sn-glycerol-3-phosphate import ATP-binding protein UgpC">
    <location>
        <begin position="1"/>
        <end position="370"/>
    </location>
</feature>
<feature type="domain" description="ABC transporter" evidence="1">
    <location>
        <begin position="4"/>
        <end position="235"/>
    </location>
</feature>
<feature type="binding site" evidence="1">
    <location>
        <begin position="37"/>
        <end position="44"/>
    </location>
    <ligand>
        <name>ATP</name>
        <dbReference type="ChEBI" id="CHEBI:30616"/>
    </ligand>
</feature>
<accession>Q1QTX6</accession>
<comment type="function">
    <text evidence="1">Part of the ABC transporter complex UgpBAEC involved in sn-glycerol-3-phosphate (G3P) import. Responsible for energy coupling to the transport system.</text>
</comment>
<comment type="catalytic activity">
    <reaction evidence="1">
        <text>sn-glycerol 3-phosphate(out) + ATP + H2O = sn-glycerol 3-phosphate(in) + ADP + phosphate + H(+)</text>
        <dbReference type="Rhea" id="RHEA:21668"/>
        <dbReference type="ChEBI" id="CHEBI:15377"/>
        <dbReference type="ChEBI" id="CHEBI:15378"/>
        <dbReference type="ChEBI" id="CHEBI:30616"/>
        <dbReference type="ChEBI" id="CHEBI:43474"/>
        <dbReference type="ChEBI" id="CHEBI:57597"/>
        <dbReference type="ChEBI" id="CHEBI:456216"/>
        <dbReference type="EC" id="7.6.2.10"/>
    </reaction>
</comment>
<comment type="subunit">
    <text evidence="1">The complex is composed of two ATP-binding proteins (UgpC), two transmembrane proteins (UgpA and UgpE) and a solute-binding protein (UgpB).</text>
</comment>
<comment type="subcellular location">
    <subcellularLocation>
        <location evidence="1">Cell inner membrane</location>
        <topology evidence="1">Peripheral membrane protein</topology>
    </subcellularLocation>
</comment>
<comment type="similarity">
    <text evidence="1">Belongs to the ABC transporter superfamily. sn-glycerol-3-phosphate importer (TC 3.A.1.1.3) family.</text>
</comment>
<keyword id="KW-0067">ATP-binding</keyword>
<keyword id="KW-0997">Cell inner membrane</keyword>
<keyword id="KW-1003">Cell membrane</keyword>
<keyword id="KW-0472">Membrane</keyword>
<keyword id="KW-0547">Nucleotide-binding</keyword>
<keyword id="KW-1185">Reference proteome</keyword>
<keyword id="KW-0762">Sugar transport</keyword>
<keyword id="KW-1278">Translocase</keyword>
<keyword id="KW-0813">Transport</keyword>